<organism>
    <name type="scientific">Pseudomonas aeruginosa (strain LESB58)</name>
    <dbReference type="NCBI Taxonomy" id="557722"/>
    <lineage>
        <taxon>Bacteria</taxon>
        <taxon>Pseudomonadati</taxon>
        <taxon>Pseudomonadota</taxon>
        <taxon>Gammaproteobacteria</taxon>
        <taxon>Pseudomonadales</taxon>
        <taxon>Pseudomonadaceae</taxon>
        <taxon>Pseudomonas</taxon>
    </lineage>
</organism>
<keyword id="KW-0963">Cytoplasm</keyword>
<feature type="chain" id="PRO_1000199926" description="Sulfur carrier protein TusA">
    <location>
        <begin position="1"/>
        <end position="79"/>
    </location>
</feature>
<feature type="active site" description="Cysteine persulfide intermediate" evidence="1">
    <location>
        <position position="16"/>
    </location>
</feature>
<protein>
    <recommendedName>
        <fullName evidence="1">Sulfur carrier protein TusA</fullName>
    </recommendedName>
</protein>
<proteinExistence type="inferred from homology"/>
<comment type="function">
    <text evidence="1">Sulfur carrier protein which probably makes part of a sulfur-relay system.</text>
</comment>
<comment type="subcellular location">
    <subcellularLocation>
        <location evidence="1">Cytoplasm</location>
    </subcellularLocation>
</comment>
<comment type="similarity">
    <text evidence="1">Belongs to the sulfur carrier protein TusA family.</text>
</comment>
<gene>
    <name evidence="1" type="primary">tusA</name>
    <name type="ordered locus">PLES_37651</name>
</gene>
<name>TUSA_PSEA8</name>
<reference key="1">
    <citation type="journal article" date="2009" name="Genome Res.">
        <title>Newly introduced genomic prophage islands are critical determinants of in vivo competitiveness in the Liverpool epidemic strain of Pseudomonas aeruginosa.</title>
        <authorList>
            <person name="Winstanley C."/>
            <person name="Langille M.G.I."/>
            <person name="Fothergill J.L."/>
            <person name="Kukavica-Ibrulj I."/>
            <person name="Paradis-Bleau C."/>
            <person name="Sanschagrin F."/>
            <person name="Thomson N.R."/>
            <person name="Winsor G.L."/>
            <person name="Quail M.A."/>
            <person name="Lennard N."/>
            <person name="Bignell A."/>
            <person name="Clarke L."/>
            <person name="Seeger K."/>
            <person name="Saunders D."/>
            <person name="Harris D."/>
            <person name="Parkhill J."/>
            <person name="Hancock R.E.W."/>
            <person name="Brinkman F.S.L."/>
            <person name="Levesque R.C."/>
        </authorList>
    </citation>
    <scope>NUCLEOTIDE SEQUENCE [LARGE SCALE GENOMIC DNA]</scope>
    <source>
        <strain>LESB58</strain>
    </source>
</reference>
<dbReference type="EMBL" id="FM209186">
    <property type="protein sequence ID" value="CAW28492.1"/>
    <property type="molecule type" value="Genomic_DNA"/>
</dbReference>
<dbReference type="RefSeq" id="WP_003105999.1">
    <property type="nucleotide sequence ID" value="NC_011770.1"/>
</dbReference>
<dbReference type="SMR" id="B7UVF9"/>
<dbReference type="KEGG" id="pag:PLES_37651"/>
<dbReference type="HOGENOM" id="CLU_165255_5_1_6"/>
<dbReference type="GO" id="GO:0005737">
    <property type="term" value="C:cytoplasm"/>
    <property type="evidence" value="ECO:0007669"/>
    <property type="project" value="UniProtKB-SubCell"/>
</dbReference>
<dbReference type="GO" id="GO:0097163">
    <property type="term" value="F:sulfur carrier activity"/>
    <property type="evidence" value="ECO:0007669"/>
    <property type="project" value="UniProtKB-UniRule"/>
</dbReference>
<dbReference type="GO" id="GO:0002143">
    <property type="term" value="P:tRNA wobble position uridine thiolation"/>
    <property type="evidence" value="ECO:0007669"/>
    <property type="project" value="InterPro"/>
</dbReference>
<dbReference type="CDD" id="cd03423">
    <property type="entry name" value="SirA"/>
    <property type="match status" value="1"/>
</dbReference>
<dbReference type="Gene3D" id="3.30.110.40">
    <property type="entry name" value="TusA-like domain"/>
    <property type="match status" value="1"/>
</dbReference>
<dbReference type="HAMAP" id="MF_00413">
    <property type="entry name" value="Thiourid_synth_A"/>
    <property type="match status" value="1"/>
</dbReference>
<dbReference type="InterPro" id="IPR022931">
    <property type="entry name" value="Sulphur_carrier_TusA"/>
</dbReference>
<dbReference type="InterPro" id="IPR001455">
    <property type="entry name" value="TusA-like"/>
</dbReference>
<dbReference type="InterPro" id="IPR036868">
    <property type="entry name" value="TusA-like_sf"/>
</dbReference>
<dbReference type="NCBIfam" id="NF001423">
    <property type="entry name" value="PRK00299.1"/>
    <property type="match status" value="1"/>
</dbReference>
<dbReference type="PANTHER" id="PTHR33279:SF2">
    <property type="entry name" value="SULFUR CARRIER PROTEIN TUSA"/>
    <property type="match status" value="1"/>
</dbReference>
<dbReference type="PANTHER" id="PTHR33279">
    <property type="entry name" value="SULFUR CARRIER PROTEIN YEDF-RELATED"/>
    <property type="match status" value="1"/>
</dbReference>
<dbReference type="Pfam" id="PF01206">
    <property type="entry name" value="TusA"/>
    <property type="match status" value="1"/>
</dbReference>
<dbReference type="SUPFAM" id="SSF64307">
    <property type="entry name" value="SirA-like"/>
    <property type="match status" value="1"/>
</dbReference>
<dbReference type="PROSITE" id="PS01148">
    <property type="entry name" value="UPF0033"/>
    <property type="match status" value="1"/>
</dbReference>
<evidence type="ECO:0000255" key="1">
    <source>
        <dbReference type="HAMAP-Rule" id="MF_00413"/>
    </source>
</evidence>
<sequence>MTHSVDAILDATGLNCPEPVMMLHNKVRDLAPGGLLKVIATDPSTRRDIPKFCVFLGHELVEQQEEAGTYLYWIRKKAD</sequence>
<accession>B7UVF9</accession>